<organism>
    <name type="scientific">Thermotoga sp. (strain RQ2)</name>
    <dbReference type="NCBI Taxonomy" id="126740"/>
    <lineage>
        <taxon>Bacteria</taxon>
        <taxon>Thermotogati</taxon>
        <taxon>Thermotogota</taxon>
        <taxon>Thermotogae</taxon>
        <taxon>Thermotogales</taxon>
        <taxon>Thermotogaceae</taxon>
        <taxon>Thermotoga</taxon>
    </lineage>
</organism>
<dbReference type="EMBL" id="CP000969">
    <property type="protein sequence ID" value="ACB09728.1"/>
    <property type="molecule type" value="Genomic_DNA"/>
</dbReference>
<dbReference type="RefSeq" id="WP_011943790.1">
    <property type="nucleotide sequence ID" value="NC_010483.1"/>
</dbReference>
<dbReference type="SMR" id="B1LBN0"/>
<dbReference type="KEGG" id="trq:TRQ2_1384"/>
<dbReference type="HOGENOM" id="CLU_095071_2_1_0"/>
<dbReference type="Proteomes" id="UP000001687">
    <property type="component" value="Chromosome"/>
</dbReference>
<dbReference type="GO" id="GO:0022625">
    <property type="term" value="C:cytosolic large ribosomal subunit"/>
    <property type="evidence" value="ECO:0007669"/>
    <property type="project" value="TreeGrafter"/>
</dbReference>
<dbReference type="GO" id="GO:0070180">
    <property type="term" value="F:large ribosomal subunit rRNA binding"/>
    <property type="evidence" value="ECO:0007669"/>
    <property type="project" value="TreeGrafter"/>
</dbReference>
<dbReference type="GO" id="GO:0003735">
    <property type="term" value="F:structural constituent of ribosome"/>
    <property type="evidence" value="ECO:0007669"/>
    <property type="project" value="InterPro"/>
</dbReference>
<dbReference type="GO" id="GO:0006412">
    <property type="term" value="P:translation"/>
    <property type="evidence" value="ECO:0007669"/>
    <property type="project" value="UniProtKB-UniRule"/>
</dbReference>
<dbReference type="CDD" id="cd00337">
    <property type="entry name" value="Ribosomal_uL14"/>
    <property type="match status" value="1"/>
</dbReference>
<dbReference type="FunFam" id="2.40.150.20:FF:000001">
    <property type="entry name" value="50S ribosomal protein L14"/>
    <property type="match status" value="1"/>
</dbReference>
<dbReference type="Gene3D" id="2.40.150.20">
    <property type="entry name" value="Ribosomal protein L14"/>
    <property type="match status" value="1"/>
</dbReference>
<dbReference type="HAMAP" id="MF_01367">
    <property type="entry name" value="Ribosomal_uL14"/>
    <property type="match status" value="1"/>
</dbReference>
<dbReference type="InterPro" id="IPR000218">
    <property type="entry name" value="Ribosomal_uL14"/>
</dbReference>
<dbReference type="InterPro" id="IPR005745">
    <property type="entry name" value="Ribosomal_uL14_bac-type"/>
</dbReference>
<dbReference type="InterPro" id="IPR019972">
    <property type="entry name" value="Ribosomal_uL14_CS"/>
</dbReference>
<dbReference type="InterPro" id="IPR036853">
    <property type="entry name" value="Ribosomal_uL14_sf"/>
</dbReference>
<dbReference type="NCBIfam" id="TIGR01067">
    <property type="entry name" value="rplN_bact"/>
    <property type="match status" value="1"/>
</dbReference>
<dbReference type="PANTHER" id="PTHR11761">
    <property type="entry name" value="50S/60S RIBOSOMAL PROTEIN L14/L23"/>
    <property type="match status" value="1"/>
</dbReference>
<dbReference type="PANTHER" id="PTHR11761:SF3">
    <property type="entry name" value="LARGE RIBOSOMAL SUBUNIT PROTEIN UL14M"/>
    <property type="match status" value="1"/>
</dbReference>
<dbReference type="Pfam" id="PF00238">
    <property type="entry name" value="Ribosomal_L14"/>
    <property type="match status" value="1"/>
</dbReference>
<dbReference type="SMART" id="SM01374">
    <property type="entry name" value="Ribosomal_L14"/>
    <property type="match status" value="1"/>
</dbReference>
<dbReference type="SUPFAM" id="SSF50193">
    <property type="entry name" value="Ribosomal protein L14"/>
    <property type="match status" value="1"/>
</dbReference>
<dbReference type="PROSITE" id="PS00049">
    <property type="entry name" value="RIBOSOMAL_L14"/>
    <property type="match status" value="1"/>
</dbReference>
<evidence type="ECO:0000255" key="1">
    <source>
        <dbReference type="HAMAP-Rule" id="MF_01367"/>
    </source>
</evidence>
<evidence type="ECO:0000305" key="2"/>
<comment type="function">
    <text evidence="1">Binds to 23S rRNA. Forms part of two intersubunit bridges in the 70S ribosome.</text>
</comment>
<comment type="subunit">
    <text evidence="1">Part of the 50S ribosomal subunit. Forms a cluster with proteins L3 and L19. In the 70S ribosome, L14 and L19 interact and together make contacts with the 16S rRNA in bridges B5 and B8.</text>
</comment>
<comment type="similarity">
    <text evidence="1">Belongs to the universal ribosomal protein uL14 family.</text>
</comment>
<accession>B1LBN0</accession>
<gene>
    <name evidence="1" type="primary">rplN</name>
    <name type="ordered locus">TRQ2_1384</name>
</gene>
<keyword id="KW-0687">Ribonucleoprotein</keyword>
<keyword id="KW-0689">Ribosomal protein</keyword>
<keyword id="KW-0694">RNA-binding</keyword>
<keyword id="KW-0699">rRNA-binding</keyword>
<sequence>MIQQETYLNVADNSGAKKLRVIRVIGGFHKKYGTVGDIVVCSVREAIPNSDVKKGDVVRAVIVRTKKEIRRSDGTYIRFDDNAAVLIDKFNAPRGTRIFGPVARELREKGFMKIVSLAPEVW</sequence>
<proteinExistence type="inferred from homology"/>
<protein>
    <recommendedName>
        <fullName evidence="1">Large ribosomal subunit protein uL14</fullName>
    </recommendedName>
    <alternativeName>
        <fullName evidence="2">50S ribosomal protein L14</fullName>
    </alternativeName>
</protein>
<name>RL14_THESQ</name>
<feature type="chain" id="PRO_1000144344" description="Large ribosomal subunit protein uL14">
    <location>
        <begin position="1"/>
        <end position="122"/>
    </location>
</feature>
<reference key="1">
    <citation type="journal article" date="2011" name="J. Bacteriol.">
        <title>Genome sequence of Thermotoga sp. strain RQ2, a hyperthermophilic bacterium isolated from a geothermally heated region of the seafloor near Ribeira Quente, the Azores.</title>
        <authorList>
            <person name="Swithers K.S."/>
            <person name="DiPippo J.L."/>
            <person name="Bruce D.C."/>
            <person name="Detter C."/>
            <person name="Tapia R."/>
            <person name="Han S."/>
            <person name="Saunders E."/>
            <person name="Goodwin L.A."/>
            <person name="Han J."/>
            <person name="Woyke T."/>
            <person name="Pitluck S."/>
            <person name="Pennacchio L."/>
            <person name="Nolan M."/>
            <person name="Mikhailova N."/>
            <person name="Lykidis A."/>
            <person name="Land M.L."/>
            <person name="Brettin T."/>
            <person name="Stetter K.O."/>
            <person name="Nelson K.E."/>
            <person name="Gogarten J.P."/>
            <person name="Noll K.M."/>
        </authorList>
    </citation>
    <scope>NUCLEOTIDE SEQUENCE [LARGE SCALE GENOMIC DNA]</scope>
    <source>
        <strain>RQ2</strain>
    </source>
</reference>